<gene>
    <name evidence="1" type="primary">plsX</name>
    <name type="ordered locus">OCAR_5875</name>
    <name type="ordered locus">OCA5_c21430</name>
</gene>
<evidence type="ECO:0000255" key="1">
    <source>
        <dbReference type="HAMAP-Rule" id="MF_00019"/>
    </source>
</evidence>
<name>PLSX_AFIC5</name>
<dbReference type="EC" id="2.3.1.274" evidence="1"/>
<dbReference type="EMBL" id="CP001196">
    <property type="protein sequence ID" value="ACI93000.1"/>
    <property type="molecule type" value="Genomic_DNA"/>
</dbReference>
<dbReference type="EMBL" id="CP002826">
    <property type="protein sequence ID" value="AEI06846.1"/>
    <property type="molecule type" value="Genomic_DNA"/>
</dbReference>
<dbReference type="RefSeq" id="WP_012563027.1">
    <property type="nucleotide sequence ID" value="NC_015684.1"/>
</dbReference>
<dbReference type="SMR" id="B6JGR6"/>
<dbReference type="STRING" id="504832.OCA5_c21430"/>
<dbReference type="KEGG" id="oca:OCAR_5875"/>
<dbReference type="KEGG" id="ocg:OCA5_c21430"/>
<dbReference type="PATRIC" id="fig|504832.7.peg.2264"/>
<dbReference type="eggNOG" id="COG0416">
    <property type="taxonomic scope" value="Bacteria"/>
</dbReference>
<dbReference type="HOGENOM" id="CLU_039379_1_0_5"/>
<dbReference type="OrthoDB" id="9806408at2"/>
<dbReference type="UniPathway" id="UPA00085"/>
<dbReference type="Proteomes" id="UP000007730">
    <property type="component" value="Chromosome"/>
</dbReference>
<dbReference type="GO" id="GO:0005737">
    <property type="term" value="C:cytoplasm"/>
    <property type="evidence" value="ECO:0007669"/>
    <property type="project" value="UniProtKB-SubCell"/>
</dbReference>
<dbReference type="GO" id="GO:0043811">
    <property type="term" value="F:phosphate:acyl-[acyl carrier protein] acyltransferase activity"/>
    <property type="evidence" value="ECO:0007669"/>
    <property type="project" value="UniProtKB-UniRule"/>
</dbReference>
<dbReference type="GO" id="GO:0006633">
    <property type="term" value="P:fatty acid biosynthetic process"/>
    <property type="evidence" value="ECO:0007669"/>
    <property type="project" value="UniProtKB-UniRule"/>
</dbReference>
<dbReference type="GO" id="GO:0008654">
    <property type="term" value="P:phospholipid biosynthetic process"/>
    <property type="evidence" value="ECO:0007669"/>
    <property type="project" value="UniProtKB-KW"/>
</dbReference>
<dbReference type="Gene3D" id="3.40.718.10">
    <property type="entry name" value="Isopropylmalate Dehydrogenase"/>
    <property type="match status" value="1"/>
</dbReference>
<dbReference type="HAMAP" id="MF_00019">
    <property type="entry name" value="PlsX"/>
    <property type="match status" value="1"/>
</dbReference>
<dbReference type="InterPro" id="IPR003664">
    <property type="entry name" value="FA_synthesis"/>
</dbReference>
<dbReference type="InterPro" id="IPR012281">
    <property type="entry name" value="Phospholipid_synth_PlsX-like"/>
</dbReference>
<dbReference type="NCBIfam" id="TIGR00182">
    <property type="entry name" value="plsX"/>
    <property type="match status" value="1"/>
</dbReference>
<dbReference type="PANTHER" id="PTHR30100">
    <property type="entry name" value="FATTY ACID/PHOSPHOLIPID SYNTHESIS PROTEIN PLSX"/>
    <property type="match status" value="1"/>
</dbReference>
<dbReference type="PANTHER" id="PTHR30100:SF1">
    <property type="entry name" value="PHOSPHATE ACYLTRANSFERASE"/>
    <property type="match status" value="1"/>
</dbReference>
<dbReference type="Pfam" id="PF02504">
    <property type="entry name" value="FA_synthesis"/>
    <property type="match status" value="1"/>
</dbReference>
<dbReference type="PIRSF" id="PIRSF002465">
    <property type="entry name" value="Phsphlp_syn_PlsX"/>
    <property type="match status" value="1"/>
</dbReference>
<dbReference type="SUPFAM" id="SSF53659">
    <property type="entry name" value="Isocitrate/Isopropylmalate dehydrogenase-like"/>
    <property type="match status" value="1"/>
</dbReference>
<sequence>MAQKVRIALDAMGGDFGPSVVVPGAGISLTRHPDTEFILFGDSAAINRQLDKHPAMKAVSRVVHTDVAITMEEKPSQALRRGRKTSSMWLALDAVRKGEADVAVSAGNTGALMAMSRFNLRMLPGIDRPAIACVWPTIRSESVVLDVGASIGADARHLASLAIMGSAMARVLFDIERPTVGLLNIGVEEVKGVEEVKEAAELLRSMDLPELEFIGFVEGDGIGKGAADVIVTEGFSGNIALKTAEGTARQIAEYLRSAMSRTWRSKIGYLFAKSAFKALRDKMDPRKVNGGVFLGLNGVVIKSHGGTDAEGFASAVDVGYEMVRYDLLTKINQTFNRDGGSLTRMPTAQEAVS</sequence>
<reference key="1">
    <citation type="journal article" date="2008" name="J. Bacteriol.">
        <title>Genome sequence of the chemolithoautotrophic bacterium Oligotropha carboxidovorans OM5T.</title>
        <authorList>
            <person name="Paul D."/>
            <person name="Bridges S."/>
            <person name="Burgess S.C."/>
            <person name="Dandass Y."/>
            <person name="Lawrence M.L."/>
        </authorList>
    </citation>
    <scope>NUCLEOTIDE SEQUENCE [LARGE SCALE GENOMIC DNA]</scope>
    <source>
        <strain>ATCC 49405 / DSM 1227 / KCTC 32145 / OM5</strain>
    </source>
</reference>
<reference key="2">
    <citation type="journal article" date="2011" name="J. Bacteriol.">
        <title>Complete genome sequences of the chemolithoautotrophic Oligotropha carboxidovorans strains OM4 and OM5.</title>
        <authorList>
            <person name="Volland S."/>
            <person name="Rachinger M."/>
            <person name="Strittmatter A."/>
            <person name="Daniel R."/>
            <person name="Gottschalk G."/>
            <person name="Meyer O."/>
        </authorList>
    </citation>
    <scope>NUCLEOTIDE SEQUENCE [LARGE SCALE GENOMIC DNA]</scope>
    <source>
        <strain>ATCC 49405 / DSM 1227 / KCTC 32145 / OM5</strain>
    </source>
</reference>
<feature type="chain" id="PRO_1000089925" description="Phosphate acyltransferase">
    <location>
        <begin position="1"/>
        <end position="353"/>
    </location>
</feature>
<accession>B6JGR6</accession>
<accession>F8BX69</accession>
<proteinExistence type="inferred from homology"/>
<protein>
    <recommendedName>
        <fullName evidence="1">Phosphate acyltransferase</fullName>
        <ecNumber evidence="1">2.3.1.274</ecNumber>
    </recommendedName>
    <alternativeName>
        <fullName evidence="1">Acyl-ACP phosphotransacylase</fullName>
    </alternativeName>
    <alternativeName>
        <fullName evidence="1">Acyl-[acyl-carrier-protein]--phosphate acyltransferase</fullName>
    </alternativeName>
    <alternativeName>
        <fullName evidence="1">Phosphate-acyl-ACP acyltransferase</fullName>
    </alternativeName>
</protein>
<comment type="function">
    <text evidence="1">Catalyzes the reversible formation of acyl-phosphate (acyl-PO(4)) from acyl-[acyl-carrier-protein] (acyl-ACP). This enzyme utilizes acyl-ACP as fatty acyl donor, but not acyl-CoA.</text>
</comment>
<comment type="catalytic activity">
    <reaction evidence="1">
        <text>a fatty acyl-[ACP] + phosphate = an acyl phosphate + holo-[ACP]</text>
        <dbReference type="Rhea" id="RHEA:42292"/>
        <dbReference type="Rhea" id="RHEA-COMP:9685"/>
        <dbReference type="Rhea" id="RHEA-COMP:14125"/>
        <dbReference type="ChEBI" id="CHEBI:43474"/>
        <dbReference type="ChEBI" id="CHEBI:59918"/>
        <dbReference type="ChEBI" id="CHEBI:64479"/>
        <dbReference type="ChEBI" id="CHEBI:138651"/>
        <dbReference type="EC" id="2.3.1.274"/>
    </reaction>
</comment>
<comment type="pathway">
    <text evidence="1">Lipid metabolism; phospholipid metabolism.</text>
</comment>
<comment type="subunit">
    <text evidence="1">Homodimer. Probably interacts with PlsY.</text>
</comment>
<comment type="subcellular location">
    <subcellularLocation>
        <location evidence="1">Cytoplasm</location>
    </subcellularLocation>
    <text evidence="1">Associated with the membrane possibly through PlsY.</text>
</comment>
<comment type="similarity">
    <text evidence="1">Belongs to the PlsX family.</text>
</comment>
<organism>
    <name type="scientific">Afipia carboxidovorans (strain ATCC 49405 / DSM 1227 / KCTC 32145 / OM5)</name>
    <name type="common">Oligotropha carboxidovorans</name>
    <dbReference type="NCBI Taxonomy" id="504832"/>
    <lineage>
        <taxon>Bacteria</taxon>
        <taxon>Pseudomonadati</taxon>
        <taxon>Pseudomonadota</taxon>
        <taxon>Alphaproteobacteria</taxon>
        <taxon>Hyphomicrobiales</taxon>
        <taxon>Nitrobacteraceae</taxon>
        <taxon>Afipia</taxon>
    </lineage>
</organism>
<keyword id="KW-0963">Cytoplasm</keyword>
<keyword id="KW-0444">Lipid biosynthesis</keyword>
<keyword id="KW-0443">Lipid metabolism</keyword>
<keyword id="KW-0594">Phospholipid biosynthesis</keyword>
<keyword id="KW-1208">Phospholipid metabolism</keyword>
<keyword id="KW-1185">Reference proteome</keyword>
<keyword id="KW-0808">Transferase</keyword>